<proteinExistence type="evidence at transcript level"/>
<sequence length="187" mass="21037">MATWGRRRAGLGGRERVTLSAGECYIVHEIYNGENAQDQFEYELEQALEAQYKYIVIEPTRIGDETARWVTVGNCLHKTAVLSGTACLLTPLALPAEYSHYVSLPAGVLSLACSTLYGISWQFDPCCKYQVEYDAYKLSRLPLHTLTSSSPVVLVRKDDIHRKRLHNTIALAALAYCIKKLYELYSV</sequence>
<dbReference type="EMBL" id="BC130106">
    <property type="protein sequence ID" value="AAI30107.1"/>
    <property type="molecule type" value="mRNA"/>
</dbReference>
<dbReference type="RefSeq" id="NP_001091267.1">
    <property type="nucleotide sequence ID" value="NM_001097798.1"/>
</dbReference>
<dbReference type="DNASU" id="100037074"/>
<dbReference type="GeneID" id="100037074"/>
<dbReference type="KEGG" id="xla:100037074"/>
<dbReference type="AGR" id="Xenbase:XB-GENE-961895"/>
<dbReference type="CTD" id="100037074"/>
<dbReference type="Xenbase" id="XB-GENE-961895">
    <property type="gene designation" value="tmem11.L"/>
</dbReference>
<dbReference type="OMA" id="FSKMAAW"/>
<dbReference type="OrthoDB" id="9970856at2759"/>
<dbReference type="Proteomes" id="UP000186698">
    <property type="component" value="Chromosome 9_10L"/>
</dbReference>
<dbReference type="Bgee" id="100037074">
    <property type="expression patterns" value="Expressed in oocyte and 19 other cell types or tissues"/>
</dbReference>
<dbReference type="GO" id="GO:0005743">
    <property type="term" value="C:mitochondrial inner membrane"/>
    <property type="evidence" value="ECO:0000250"/>
    <property type="project" value="UniProtKB"/>
</dbReference>
<dbReference type="GO" id="GO:0007007">
    <property type="term" value="P:inner mitochondrial membrane organization"/>
    <property type="evidence" value="ECO:0000318"/>
    <property type="project" value="GO_Central"/>
</dbReference>
<dbReference type="GO" id="GO:0007005">
    <property type="term" value="P:mitochondrion organization"/>
    <property type="evidence" value="ECO:0000250"/>
    <property type="project" value="UniProtKB"/>
</dbReference>
<dbReference type="InterPro" id="IPR026120">
    <property type="entry name" value="TMEM11"/>
</dbReference>
<dbReference type="PANTHER" id="PTHR15099">
    <property type="entry name" value="PROTEIN PM1"/>
    <property type="match status" value="1"/>
</dbReference>
<dbReference type="PANTHER" id="PTHR15099:SF2">
    <property type="entry name" value="TRANSMEMBRANE PROTEIN 11, MITOCHONDRIAL"/>
    <property type="match status" value="1"/>
</dbReference>
<dbReference type="Pfam" id="PF14972">
    <property type="entry name" value="Mito_morph_reg"/>
    <property type="match status" value="1"/>
</dbReference>
<protein>
    <recommendedName>
        <fullName>Transmembrane protein 11-A, mitochondrial</fullName>
    </recommendedName>
</protein>
<feature type="chain" id="PRO_0000406211" description="Transmembrane protein 11-A, mitochondrial">
    <location>
        <begin position="1"/>
        <end position="187"/>
    </location>
</feature>
<feature type="transmembrane region" description="Helical" evidence="2">
    <location>
        <begin position="79"/>
        <end position="95"/>
    </location>
</feature>
<feature type="transmembrane region" description="Helical" evidence="2">
    <location>
        <begin position="102"/>
        <end position="119"/>
    </location>
</feature>
<accession>A2BD92</accession>
<comment type="function">
    <text evidence="1">Plays a role in mitochondrial morphogenesis.</text>
</comment>
<comment type="subcellular location">
    <subcellularLocation>
        <location evidence="1">Mitochondrion inner membrane</location>
        <topology evidence="1">Multi-pass membrane protein</topology>
    </subcellularLocation>
</comment>
<comment type="similarity">
    <text evidence="3">Belongs to the TMEM11 family.</text>
</comment>
<gene>
    <name type="primary">tmem11-a</name>
    <name type="synonym">tmem11</name>
</gene>
<reference key="1">
    <citation type="submission" date="2006-12" db="EMBL/GenBank/DDBJ databases">
        <authorList>
            <consortium name="NIH - Xenopus Gene Collection (XGC) project"/>
        </authorList>
    </citation>
    <scope>NUCLEOTIDE SEQUENCE [LARGE SCALE MRNA]</scope>
    <source>
        <tissue>Liver</tissue>
    </source>
</reference>
<evidence type="ECO:0000250" key="1"/>
<evidence type="ECO:0000255" key="2"/>
<evidence type="ECO:0000305" key="3"/>
<organism>
    <name type="scientific">Xenopus laevis</name>
    <name type="common">African clawed frog</name>
    <dbReference type="NCBI Taxonomy" id="8355"/>
    <lineage>
        <taxon>Eukaryota</taxon>
        <taxon>Metazoa</taxon>
        <taxon>Chordata</taxon>
        <taxon>Craniata</taxon>
        <taxon>Vertebrata</taxon>
        <taxon>Euteleostomi</taxon>
        <taxon>Amphibia</taxon>
        <taxon>Batrachia</taxon>
        <taxon>Anura</taxon>
        <taxon>Pipoidea</taxon>
        <taxon>Pipidae</taxon>
        <taxon>Xenopodinae</taxon>
        <taxon>Xenopus</taxon>
        <taxon>Xenopus</taxon>
    </lineage>
</organism>
<keyword id="KW-0472">Membrane</keyword>
<keyword id="KW-0496">Mitochondrion</keyword>
<keyword id="KW-0999">Mitochondrion inner membrane</keyword>
<keyword id="KW-1185">Reference proteome</keyword>
<keyword id="KW-0812">Transmembrane</keyword>
<keyword id="KW-1133">Transmembrane helix</keyword>
<name>TM11A_XENLA</name>